<dbReference type="EC" id="5.1.1.7" evidence="1"/>
<dbReference type="EMBL" id="CP001616">
    <property type="protein sequence ID" value="ACQ94709.1"/>
    <property type="molecule type" value="Genomic_DNA"/>
</dbReference>
<dbReference type="RefSeq" id="WP_015880158.1">
    <property type="nucleotide sequence ID" value="NC_012691.1"/>
</dbReference>
<dbReference type="SMR" id="C4LDU8"/>
<dbReference type="STRING" id="595494.Tola_3121"/>
<dbReference type="KEGG" id="tau:Tola_3121"/>
<dbReference type="eggNOG" id="COG0253">
    <property type="taxonomic scope" value="Bacteria"/>
</dbReference>
<dbReference type="HOGENOM" id="CLU_053306_1_1_6"/>
<dbReference type="OrthoDB" id="9805408at2"/>
<dbReference type="UniPathway" id="UPA00034">
    <property type="reaction ID" value="UER00025"/>
</dbReference>
<dbReference type="Proteomes" id="UP000009073">
    <property type="component" value="Chromosome"/>
</dbReference>
<dbReference type="GO" id="GO:0005829">
    <property type="term" value="C:cytosol"/>
    <property type="evidence" value="ECO:0007669"/>
    <property type="project" value="TreeGrafter"/>
</dbReference>
<dbReference type="GO" id="GO:0008837">
    <property type="term" value="F:diaminopimelate epimerase activity"/>
    <property type="evidence" value="ECO:0007669"/>
    <property type="project" value="UniProtKB-UniRule"/>
</dbReference>
<dbReference type="GO" id="GO:0009089">
    <property type="term" value="P:lysine biosynthetic process via diaminopimelate"/>
    <property type="evidence" value="ECO:0007669"/>
    <property type="project" value="UniProtKB-UniRule"/>
</dbReference>
<dbReference type="FunFam" id="3.10.310.10:FF:000001">
    <property type="entry name" value="Diaminopimelate epimerase"/>
    <property type="match status" value="1"/>
</dbReference>
<dbReference type="FunFam" id="3.10.310.10:FF:000002">
    <property type="entry name" value="Diaminopimelate epimerase"/>
    <property type="match status" value="1"/>
</dbReference>
<dbReference type="Gene3D" id="3.10.310.10">
    <property type="entry name" value="Diaminopimelate Epimerase, Chain A, domain 1"/>
    <property type="match status" value="2"/>
</dbReference>
<dbReference type="HAMAP" id="MF_00197">
    <property type="entry name" value="DAP_epimerase"/>
    <property type="match status" value="1"/>
</dbReference>
<dbReference type="InterPro" id="IPR018510">
    <property type="entry name" value="DAP_epimerase_AS"/>
</dbReference>
<dbReference type="InterPro" id="IPR001653">
    <property type="entry name" value="DAP_epimerase_DapF"/>
</dbReference>
<dbReference type="NCBIfam" id="TIGR00652">
    <property type="entry name" value="DapF"/>
    <property type="match status" value="1"/>
</dbReference>
<dbReference type="PANTHER" id="PTHR31689:SF0">
    <property type="entry name" value="DIAMINOPIMELATE EPIMERASE"/>
    <property type="match status" value="1"/>
</dbReference>
<dbReference type="PANTHER" id="PTHR31689">
    <property type="entry name" value="DIAMINOPIMELATE EPIMERASE, CHLOROPLASTIC"/>
    <property type="match status" value="1"/>
</dbReference>
<dbReference type="Pfam" id="PF01678">
    <property type="entry name" value="DAP_epimerase"/>
    <property type="match status" value="2"/>
</dbReference>
<dbReference type="SUPFAM" id="SSF54506">
    <property type="entry name" value="Diaminopimelate epimerase-like"/>
    <property type="match status" value="1"/>
</dbReference>
<dbReference type="PROSITE" id="PS01326">
    <property type="entry name" value="DAP_EPIMERASE"/>
    <property type="match status" value="1"/>
</dbReference>
<reference key="1">
    <citation type="submission" date="2009-05" db="EMBL/GenBank/DDBJ databases">
        <title>Complete sequence of Tolumonas auensis DSM 9187.</title>
        <authorList>
            <consortium name="US DOE Joint Genome Institute"/>
            <person name="Lucas S."/>
            <person name="Copeland A."/>
            <person name="Lapidus A."/>
            <person name="Glavina del Rio T."/>
            <person name="Tice H."/>
            <person name="Bruce D."/>
            <person name="Goodwin L."/>
            <person name="Pitluck S."/>
            <person name="Chertkov O."/>
            <person name="Brettin T."/>
            <person name="Detter J.C."/>
            <person name="Han C."/>
            <person name="Larimer F."/>
            <person name="Land M."/>
            <person name="Hauser L."/>
            <person name="Kyrpides N."/>
            <person name="Mikhailova N."/>
            <person name="Spring S."/>
            <person name="Beller H."/>
        </authorList>
    </citation>
    <scope>NUCLEOTIDE SEQUENCE [LARGE SCALE GENOMIC DNA]</scope>
    <source>
        <strain>DSM 9187 / NBRC 110442 / TA 4</strain>
    </source>
</reference>
<keyword id="KW-0028">Amino-acid biosynthesis</keyword>
<keyword id="KW-0963">Cytoplasm</keyword>
<keyword id="KW-0413">Isomerase</keyword>
<keyword id="KW-0457">Lysine biosynthesis</keyword>
<keyword id="KW-1185">Reference proteome</keyword>
<organism>
    <name type="scientific">Tolumonas auensis (strain DSM 9187 / NBRC 110442 / TA 4)</name>
    <dbReference type="NCBI Taxonomy" id="595494"/>
    <lineage>
        <taxon>Bacteria</taxon>
        <taxon>Pseudomonadati</taxon>
        <taxon>Pseudomonadota</taxon>
        <taxon>Gammaproteobacteria</taxon>
        <taxon>Aeromonadales</taxon>
        <taxon>Aeromonadaceae</taxon>
        <taxon>Tolumonas</taxon>
    </lineage>
</organism>
<sequence length="276" mass="30277">MLIQFSKMHGLGNDFVVVDGVTQKVFFNAETLKRLGDRHFGIGFDQLLLVEPPYDPDLDFHYRIFNADGSEVQQCGNGARCFARFVRLKGLTNKDRIAVSTVSGRIVLQLEDNDQVTVNMGVPEFEPAKIPFRALKAEKLYLLRVAEQTVMCGVVSMGNPHCVIEVPSVKDAPVETLGPKLESFDRFPERINVGFMEVVSASEINLRVYERGAGETLACGTGACAAVVVGIQQEKLKGRVKVNLPGGSLYISWNGPGSPVYMTGPAEHVFDGQIEL</sequence>
<proteinExistence type="inferred from homology"/>
<protein>
    <recommendedName>
        <fullName evidence="1">Diaminopimelate epimerase</fullName>
        <shortName evidence="1">DAP epimerase</shortName>
        <ecNumber evidence="1">5.1.1.7</ecNumber>
    </recommendedName>
    <alternativeName>
        <fullName evidence="1">PLP-independent amino acid racemase</fullName>
    </alternativeName>
</protein>
<feature type="chain" id="PRO_1000204069" description="Diaminopimelate epimerase">
    <location>
        <begin position="1"/>
        <end position="276"/>
    </location>
</feature>
<feature type="active site" description="Proton donor" evidence="1">
    <location>
        <position position="75"/>
    </location>
</feature>
<feature type="active site" description="Proton acceptor" evidence="1">
    <location>
        <position position="219"/>
    </location>
</feature>
<feature type="binding site" evidence="1">
    <location>
        <position position="13"/>
    </location>
    <ligand>
        <name>substrate</name>
    </ligand>
</feature>
<feature type="binding site" evidence="1">
    <location>
        <position position="46"/>
    </location>
    <ligand>
        <name>substrate</name>
    </ligand>
</feature>
<feature type="binding site" evidence="1">
    <location>
        <position position="66"/>
    </location>
    <ligand>
        <name>substrate</name>
    </ligand>
</feature>
<feature type="binding site" evidence="1">
    <location>
        <begin position="76"/>
        <end position="77"/>
    </location>
    <ligand>
        <name>substrate</name>
    </ligand>
</feature>
<feature type="binding site" evidence="1">
    <location>
        <position position="159"/>
    </location>
    <ligand>
        <name>substrate</name>
    </ligand>
</feature>
<feature type="binding site" evidence="1">
    <location>
        <position position="192"/>
    </location>
    <ligand>
        <name>substrate</name>
    </ligand>
</feature>
<feature type="binding site" evidence="1">
    <location>
        <begin position="210"/>
        <end position="211"/>
    </location>
    <ligand>
        <name>substrate</name>
    </ligand>
</feature>
<feature type="binding site" evidence="1">
    <location>
        <begin position="220"/>
        <end position="221"/>
    </location>
    <ligand>
        <name>substrate</name>
    </ligand>
</feature>
<feature type="site" description="Could be important to modulate the pK values of the two catalytic cysteine residues" evidence="1">
    <location>
        <position position="161"/>
    </location>
</feature>
<feature type="site" description="Could be important to modulate the pK values of the two catalytic cysteine residues" evidence="1">
    <location>
        <position position="210"/>
    </location>
</feature>
<feature type="site" description="Important for dimerization" evidence="1">
    <location>
        <position position="270"/>
    </location>
</feature>
<evidence type="ECO:0000255" key="1">
    <source>
        <dbReference type="HAMAP-Rule" id="MF_00197"/>
    </source>
</evidence>
<accession>C4LDU8</accession>
<comment type="function">
    <text evidence="1">Catalyzes the stereoinversion of LL-2,6-diaminopimelate (L,L-DAP) to meso-diaminopimelate (meso-DAP), a precursor of L-lysine and an essential component of the bacterial peptidoglycan.</text>
</comment>
<comment type="catalytic activity">
    <reaction evidence="1">
        <text>(2S,6S)-2,6-diaminopimelate = meso-2,6-diaminopimelate</text>
        <dbReference type="Rhea" id="RHEA:15393"/>
        <dbReference type="ChEBI" id="CHEBI:57609"/>
        <dbReference type="ChEBI" id="CHEBI:57791"/>
        <dbReference type="EC" id="5.1.1.7"/>
    </reaction>
</comment>
<comment type="pathway">
    <text evidence="1">Amino-acid biosynthesis; L-lysine biosynthesis via DAP pathway; DL-2,6-diaminopimelate from LL-2,6-diaminopimelate: step 1/1.</text>
</comment>
<comment type="subunit">
    <text evidence="1">Homodimer.</text>
</comment>
<comment type="subcellular location">
    <subcellularLocation>
        <location evidence="1">Cytoplasm</location>
    </subcellularLocation>
</comment>
<comment type="similarity">
    <text evidence="1">Belongs to the diaminopimelate epimerase family.</text>
</comment>
<gene>
    <name evidence="1" type="primary">dapF</name>
    <name type="ordered locus">Tola_3121</name>
</gene>
<name>DAPF_TOLAT</name>